<reference key="1">
    <citation type="journal article" date="2006" name="Nat. Biotechnol.">
        <title>Complete genome of the mutualistic, N2-fixing grass endophyte Azoarcus sp. strain BH72.</title>
        <authorList>
            <person name="Krause A."/>
            <person name="Ramakumar A."/>
            <person name="Bartels D."/>
            <person name="Battistoni F."/>
            <person name="Bekel T."/>
            <person name="Boch J."/>
            <person name="Boehm M."/>
            <person name="Friedrich F."/>
            <person name="Hurek T."/>
            <person name="Krause L."/>
            <person name="Linke B."/>
            <person name="McHardy A.C."/>
            <person name="Sarkar A."/>
            <person name="Schneiker S."/>
            <person name="Syed A.A."/>
            <person name="Thauer R."/>
            <person name="Vorhoelter F.-J."/>
            <person name="Weidner S."/>
            <person name="Puehler A."/>
            <person name="Reinhold-Hurek B."/>
            <person name="Kaiser O."/>
            <person name="Goesmann A."/>
        </authorList>
    </citation>
    <scope>NUCLEOTIDE SEQUENCE [LARGE SCALE GENOMIC DNA]</scope>
    <source>
        <strain>BH72</strain>
    </source>
</reference>
<dbReference type="EC" id="2.7.1.33" evidence="1"/>
<dbReference type="EMBL" id="AM406670">
    <property type="protein sequence ID" value="CAL93350.1"/>
    <property type="molecule type" value="Genomic_DNA"/>
</dbReference>
<dbReference type="RefSeq" id="WP_011764467.1">
    <property type="nucleotide sequence ID" value="NC_008702.1"/>
</dbReference>
<dbReference type="SMR" id="A1K3E5"/>
<dbReference type="STRING" id="62928.azo0733"/>
<dbReference type="KEGG" id="azo:azo0733"/>
<dbReference type="eggNOG" id="COG1521">
    <property type="taxonomic scope" value="Bacteria"/>
</dbReference>
<dbReference type="HOGENOM" id="CLU_066627_0_0_4"/>
<dbReference type="UniPathway" id="UPA00241">
    <property type="reaction ID" value="UER00352"/>
</dbReference>
<dbReference type="Proteomes" id="UP000002588">
    <property type="component" value="Chromosome"/>
</dbReference>
<dbReference type="GO" id="GO:0005737">
    <property type="term" value="C:cytoplasm"/>
    <property type="evidence" value="ECO:0007669"/>
    <property type="project" value="UniProtKB-SubCell"/>
</dbReference>
<dbReference type="GO" id="GO:0005524">
    <property type="term" value="F:ATP binding"/>
    <property type="evidence" value="ECO:0007669"/>
    <property type="project" value="UniProtKB-UniRule"/>
</dbReference>
<dbReference type="GO" id="GO:0004594">
    <property type="term" value="F:pantothenate kinase activity"/>
    <property type="evidence" value="ECO:0007669"/>
    <property type="project" value="UniProtKB-UniRule"/>
</dbReference>
<dbReference type="GO" id="GO:0015937">
    <property type="term" value="P:coenzyme A biosynthetic process"/>
    <property type="evidence" value="ECO:0007669"/>
    <property type="project" value="UniProtKB-UniRule"/>
</dbReference>
<dbReference type="CDD" id="cd24015">
    <property type="entry name" value="ASKHA_NBD_PanK-III"/>
    <property type="match status" value="1"/>
</dbReference>
<dbReference type="Gene3D" id="3.30.420.40">
    <property type="match status" value="2"/>
</dbReference>
<dbReference type="HAMAP" id="MF_01274">
    <property type="entry name" value="Pantothen_kinase_3"/>
    <property type="match status" value="1"/>
</dbReference>
<dbReference type="InterPro" id="IPR043129">
    <property type="entry name" value="ATPase_NBD"/>
</dbReference>
<dbReference type="InterPro" id="IPR004619">
    <property type="entry name" value="Type_III_PanK"/>
</dbReference>
<dbReference type="NCBIfam" id="TIGR00671">
    <property type="entry name" value="baf"/>
    <property type="match status" value="1"/>
</dbReference>
<dbReference type="PANTHER" id="PTHR34265">
    <property type="entry name" value="TYPE III PANTOTHENATE KINASE"/>
    <property type="match status" value="1"/>
</dbReference>
<dbReference type="PANTHER" id="PTHR34265:SF1">
    <property type="entry name" value="TYPE III PANTOTHENATE KINASE"/>
    <property type="match status" value="1"/>
</dbReference>
<dbReference type="Pfam" id="PF03309">
    <property type="entry name" value="Pan_kinase"/>
    <property type="match status" value="1"/>
</dbReference>
<dbReference type="SUPFAM" id="SSF53067">
    <property type="entry name" value="Actin-like ATPase domain"/>
    <property type="match status" value="2"/>
</dbReference>
<protein>
    <recommendedName>
        <fullName evidence="1">Type III pantothenate kinase</fullName>
        <ecNumber evidence="1">2.7.1.33</ecNumber>
    </recommendedName>
    <alternativeName>
        <fullName evidence="1">PanK-III</fullName>
    </alternativeName>
    <alternativeName>
        <fullName evidence="1">Pantothenic acid kinase</fullName>
    </alternativeName>
</protein>
<sequence>MILLLDVGNTRIKWRVVQAAGTPAMAEGALGHAEVHGLQAIVAGFPALRRMVGSNVAGASLGAALDGMLTTAGIAGRWVQAARDEHGVRNGYDRPAQLGTDRWAALIGARRLHGGPCLVVSAGTATTVDHLDADGQFQGGLILPGIDLMRQSLASNTSGLRLEDGHVTPHPRNTADAIESGCAMAQAGAVERMFAQLVPQEDALCVLTGGAAPRFADLLSVRTHPVPNLVLDGLAVIAAADAADSCPPHPTGTRAWPGDGRIR</sequence>
<keyword id="KW-0067">ATP-binding</keyword>
<keyword id="KW-0173">Coenzyme A biosynthesis</keyword>
<keyword id="KW-0963">Cytoplasm</keyword>
<keyword id="KW-0418">Kinase</keyword>
<keyword id="KW-0547">Nucleotide-binding</keyword>
<keyword id="KW-0630">Potassium</keyword>
<keyword id="KW-1185">Reference proteome</keyword>
<keyword id="KW-0808">Transferase</keyword>
<comment type="function">
    <text evidence="1">Catalyzes the phosphorylation of pantothenate (Pan), the first step in CoA biosynthesis.</text>
</comment>
<comment type="catalytic activity">
    <reaction evidence="1">
        <text>(R)-pantothenate + ATP = (R)-4'-phosphopantothenate + ADP + H(+)</text>
        <dbReference type="Rhea" id="RHEA:16373"/>
        <dbReference type="ChEBI" id="CHEBI:10986"/>
        <dbReference type="ChEBI" id="CHEBI:15378"/>
        <dbReference type="ChEBI" id="CHEBI:29032"/>
        <dbReference type="ChEBI" id="CHEBI:30616"/>
        <dbReference type="ChEBI" id="CHEBI:456216"/>
        <dbReference type="EC" id="2.7.1.33"/>
    </reaction>
</comment>
<comment type="cofactor">
    <cofactor evidence="1">
        <name>NH4(+)</name>
        <dbReference type="ChEBI" id="CHEBI:28938"/>
    </cofactor>
    <cofactor evidence="1">
        <name>K(+)</name>
        <dbReference type="ChEBI" id="CHEBI:29103"/>
    </cofactor>
    <text evidence="1">A monovalent cation. Ammonium or potassium.</text>
</comment>
<comment type="pathway">
    <text evidence="1">Cofactor biosynthesis; coenzyme A biosynthesis; CoA from (R)-pantothenate: step 1/5.</text>
</comment>
<comment type="subunit">
    <text evidence="1">Homodimer.</text>
</comment>
<comment type="subcellular location">
    <subcellularLocation>
        <location evidence="1">Cytoplasm</location>
    </subcellularLocation>
</comment>
<comment type="similarity">
    <text evidence="1">Belongs to the type III pantothenate kinase family.</text>
</comment>
<proteinExistence type="inferred from homology"/>
<gene>
    <name evidence="1" type="primary">coaX</name>
    <name type="ordered locus">azo0733</name>
</gene>
<accession>A1K3E5</accession>
<evidence type="ECO:0000255" key="1">
    <source>
        <dbReference type="HAMAP-Rule" id="MF_01274"/>
    </source>
</evidence>
<organism>
    <name type="scientific">Azoarcus sp. (strain BH72)</name>
    <dbReference type="NCBI Taxonomy" id="418699"/>
    <lineage>
        <taxon>Bacteria</taxon>
        <taxon>Pseudomonadati</taxon>
        <taxon>Pseudomonadota</taxon>
        <taxon>Betaproteobacteria</taxon>
        <taxon>Rhodocyclales</taxon>
        <taxon>Zoogloeaceae</taxon>
        <taxon>Azoarcus</taxon>
    </lineage>
</organism>
<feature type="chain" id="PRO_1000054357" description="Type III pantothenate kinase">
    <location>
        <begin position="1"/>
        <end position="263"/>
    </location>
</feature>
<feature type="active site" description="Proton acceptor" evidence="1">
    <location>
        <position position="101"/>
    </location>
</feature>
<feature type="binding site" evidence="1">
    <location>
        <begin position="6"/>
        <end position="13"/>
    </location>
    <ligand>
        <name>ATP</name>
        <dbReference type="ChEBI" id="CHEBI:30616"/>
    </ligand>
</feature>
<feature type="binding site" evidence="1">
    <location>
        <position position="92"/>
    </location>
    <ligand>
        <name>substrate</name>
    </ligand>
</feature>
<feature type="binding site" evidence="1">
    <location>
        <begin position="99"/>
        <end position="102"/>
    </location>
    <ligand>
        <name>substrate</name>
    </ligand>
</feature>
<feature type="binding site" evidence="1">
    <location>
        <position position="124"/>
    </location>
    <ligand>
        <name>ATP</name>
        <dbReference type="ChEBI" id="CHEBI:30616"/>
    </ligand>
</feature>
<feature type="binding site" evidence="1">
    <location>
        <position position="174"/>
    </location>
    <ligand>
        <name>substrate</name>
    </ligand>
</feature>
<name>COAX_AZOSB</name>